<sequence length="74" mass="8652">MDLSVKSEENVEYMVEAIKEKLRMVNAGAMRAASFNEEMYEDLRDIYEHVMKRETFSISEMQAITEELGTLIKK</sequence>
<feature type="chain" id="PRO_0000291407" description="UPF0435 protein BALH_0406">
    <location>
        <begin position="1"/>
        <end position="74"/>
    </location>
</feature>
<protein>
    <recommendedName>
        <fullName evidence="1">UPF0435 protein BALH_0406</fullName>
    </recommendedName>
</protein>
<accession>A0R9B0</accession>
<proteinExistence type="inferred from homology"/>
<organism>
    <name type="scientific">Bacillus thuringiensis (strain Al Hakam)</name>
    <dbReference type="NCBI Taxonomy" id="412694"/>
    <lineage>
        <taxon>Bacteria</taxon>
        <taxon>Bacillati</taxon>
        <taxon>Bacillota</taxon>
        <taxon>Bacilli</taxon>
        <taxon>Bacillales</taxon>
        <taxon>Bacillaceae</taxon>
        <taxon>Bacillus</taxon>
        <taxon>Bacillus cereus group</taxon>
    </lineage>
</organism>
<dbReference type="EMBL" id="CP000485">
    <property type="protein sequence ID" value="ABK83803.1"/>
    <property type="molecule type" value="Genomic_DNA"/>
</dbReference>
<dbReference type="RefSeq" id="WP_000366197.1">
    <property type="nucleotide sequence ID" value="NC_008600.1"/>
</dbReference>
<dbReference type="SMR" id="A0R9B0"/>
<dbReference type="KEGG" id="btl:BALH_0406"/>
<dbReference type="HOGENOM" id="CLU_199533_1_0_9"/>
<dbReference type="HAMAP" id="MF_00829">
    <property type="entry name" value="UPF0435"/>
    <property type="match status" value="1"/>
</dbReference>
<dbReference type="InterPro" id="IPR009507">
    <property type="entry name" value="UPF0435"/>
</dbReference>
<dbReference type="Pfam" id="PF06569">
    <property type="entry name" value="DUF1128"/>
    <property type="match status" value="1"/>
</dbReference>
<gene>
    <name type="ordered locus">BALH_0406</name>
</gene>
<evidence type="ECO:0000255" key="1">
    <source>
        <dbReference type="HAMAP-Rule" id="MF_00829"/>
    </source>
</evidence>
<reference key="1">
    <citation type="journal article" date="2007" name="J. Bacteriol.">
        <title>The complete genome sequence of Bacillus thuringiensis Al Hakam.</title>
        <authorList>
            <person name="Challacombe J.F."/>
            <person name="Altherr M.R."/>
            <person name="Xie G."/>
            <person name="Bhotika S.S."/>
            <person name="Brown N."/>
            <person name="Bruce D."/>
            <person name="Campbell C.S."/>
            <person name="Campbell M.L."/>
            <person name="Chen J."/>
            <person name="Chertkov O."/>
            <person name="Cleland C."/>
            <person name="Dimitrijevic M."/>
            <person name="Doggett N.A."/>
            <person name="Fawcett J.J."/>
            <person name="Glavina T."/>
            <person name="Goodwin L.A."/>
            <person name="Green L.D."/>
            <person name="Han C.S."/>
            <person name="Hill K.K."/>
            <person name="Hitchcock P."/>
            <person name="Jackson P.J."/>
            <person name="Keim P."/>
            <person name="Kewalramani A.R."/>
            <person name="Longmire J."/>
            <person name="Lucas S."/>
            <person name="Malfatti S."/>
            <person name="Martinez D."/>
            <person name="McMurry K."/>
            <person name="Meincke L.J."/>
            <person name="Misra M."/>
            <person name="Moseman B.L."/>
            <person name="Mundt M."/>
            <person name="Munk A.C."/>
            <person name="Okinaka R.T."/>
            <person name="Parson-Quintana B."/>
            <person name="Reilly L.P."/>
            <person name="Richardson P."/>
            <person name="Robinson D.L."/>
            <person name="Saunders E."/>
            <person name="Tapia R."/>
            <person name="Tesmer J.G."/>
            <person name="Thayer N."/>
            <person name="Thompson L.S."/>
            <person name="Tice H."/>
            <person name="Ticknor L.O."/>
            <person name="Wills P.L."/>
            <person name="Gilna P."/>
            <person name="Brettin T.S."/>
        </authorList>
    </citation>
    <scope>NUCLEOTIDE SEQUENCE [LARGE SCALE GENOMIC DNA]</scope>
    <source>
        <strain>Al Hakam</strain>
    </source>
</reference>
<comment type="similarity">
    <text evidence="1">Belongs to the UPF0435 family.</text>
</comment>
<name>Y406_BACAH</name>